<accession>Q9X7P0</accession>
<comment type="subcellular location">
    <subcellularLocation>
        <location evidence="1">Cell membrane</location>
        <topology evidence="1">Multi-pass membrane protein</topology>
    </subcellularLocation>
</comment>
<comment type="similarity">
    <text evidence="3">Belongs to the amino acid-polyamine-organocation (APC) superfamily. Amino acid transporter (AAT) (TC 2.A.3.1) family.</text>
</comment>
<reference key="1">
    <citation type="journal article" date="2002" name="Nature">
        <title>Complete genome sequence of the model actinomycete Streptomyces coelicolor A3(2).</title>
        <authorList>
            <person name="Bentley S.D."/>
            <person name="Chater K.F."/>
            <person name="Cerdeno-Tarraga A.-M."/>
            <person name="Challis G.L."/>
            <person name="Thomson N.R."/>
            <person name="James K.D."/>
            <person name="Harris D.E."/>
            <person name="Quail M.A."/>
            <person name="Kieser H."/>
            <person name="Harper D."/>
            <person name="Bateman A."/>
            <person name="Brown S."/>
            <person name="Chandra G."/>
            <person name="Chen C.W."/>
            <person name="Collins M."/>
            <person name="Cronin A."/>
            <person name="Fraser A."/>
            <person name="Goble A."/>
            <person name="Hidalgo J."/>
            <person name="Hornsby T."/>
            <person name="Howarth S."/>
            <person name="Huang C.-H."/>
            <person name="Kieser T."/>
            <person name="Larke L."/>
            <person name="Murphy L.D."/>
            <person name="Oliver K."/>
            <person name="O'Neil S."/>
            <person name="Rabbinowitsch E."/>
            <person name="Rajandream M.A."/>
            <person name="Rutherford K.M."/>
            <person name="Rutter S."/>
            <person name="Seeger K."/>
            <person name="Saunders D."/>
            <person name="Sharp S."/>
            <person name="Squares R."/>
            <person name="Squares S."/>
            <person name="Taylor K."/>
            <person name="Warren T."/>
            <person name="Wietzorrek A."/>
            <person name="Woodward J.R."/>
            <person name="Barrell B.G."/>
            <person name="Parkhill J."/>
            <person name="Hopwood D.A."/>
        </authorList>
    </citation>
    <scope>NUCLEOTIDE SEQUENCE [LARGE SCALE GENOMIC DNA]</scope>
    <source>
        <strain>ATCC BAA-471 / A3(2) / M145</strain>
    </source>
</reference>
<organism>
    <name type="scientific">Streptomyces coelicolor (strain ATCC BAA-471 / A3(2) / M145)</name>
    <dbReference type="NCBI Taxonomy" id="100226"/>
    <lineage>
        <taxon>Bacteria</taxon>
        <taxon>Bacillati</taxon>
        <taxon>Actinomycetota</taxon>
        <taxon>Actinomycetes</taxon>
        <taxon>Kitasatosporales</taxon>
        <taxon>Streptomycetaceae</taxon>
        <taxon>Streptomyces</taxon>
        <taxon>Streptomyces albidoflavus group</taxon>
    </lineage>
</organism>
<gene>
    <name type="primary">ansP</name>
    <name type="ordered locus">SCO6734</name>
    <name type="ORF">SC5F2A.17</name>
</gene>
<evidence type="ECO:0000250" key="1"/>
<evidence type="ECO:0000255" key="2"/>
<evidence type="ECO:0000305" key="3"/>
<feature type="chain" id="PRO_0000054191" description="L-asparagine permease">
    <location>
        <begin position="1"/>
        <end position="489"/>
    </location>
</feature>
<feature type="transmembrane region" description="Helical" evidence="2">
    <location>
        <begin position="38"/>
        <end position="58"/>
    </location>
</feature>
<feature type="transmembrane region" description="Helical" evidence="2">
    <location>
        <begin position="62"/>
        <end position="82"/>
    </location>
</feature>
<feature type="transmembrane region" description="Helical" evidence="2">
    <location>
        <begin position="113"/>
        <end position="133"/>
    </location>
</feature>
<feature type="transmembrane region" description="Helical" evidence="2">
    <location>
        <begin position="150"/>
        <end position="170"/>
    </location>
</feature>
<feature type="transmembrane region" description="Helical" evidence="2">
    <location>
        <begin position="175"/>
        <end position="195"/>
    </location>
</feature>
<feature type="transmembrane region" description="Helical" evidence="2">
    <location>
        <begin position="223"/>
        <end position="243"/>
    </location>
</feature>
<feature type="transmembrane region" description="Helical" evidence="2">
    <location>
        <begin position="268"/>
        <end position="288"/>
    </location>
</feature>
<feature type="transmembrane region" description="Helical" evidence="2">
    <location>
        <begin position="302"/>
        <end position="322"/>
    </location>
</feature>
<feature type="transmembrane region" description="Helical" evidence="2">
    <location>
        <begin position="357"/>
        <end position="377"/>
    </location>
</feature>
<feature type="transmembrane region" description="Helical" evidence="2">
    <location>
        <begin position="382"/>
        <end position="402"/>
    </location>
</feature>
<feature type="transmembrane region" description="Helical" evidence="2">
    <location>
        <begin position="426"/>
        <end position="446"/>
    </location>
</feature>
<feature type="transmembrane region" description="Helical" evidence="2">
    <location>
        <begin position="452"/>
        <end position="472"/>
    </location>
</feature>
<keyword id="KW-0029">Amino-acid transport</keyword>
<keyword id="KW-1003">Cell membrane</keyword>
<keyword id="KW-0472">Membrane</keyword>
<keyword id="KW-1185">Reference proteome</keyword>
<keyword id="KW-0812">Transmembrane</keyword>
<keyword id="KW-1133">Transmembrane helix</keyword>
<keyword id="KW-0813">Transport</keyword>
<proteinExistence type="inferred from homology"/>
<protein>
    <recommendedName>
        <fullName>L-asparagine permease</fullName>
    </recommendedName>
    <alternativeName>
        <fullName>L-asparagine transport protein</fullName>
    </alternativeName>
</protein>
<sequence length="489" mass="51797">MSKDAVDTAQVAAHPQATGTIPADAGDAGYSKDLKARHVNMIAIGGAIGTGLFLGAGGRLRDAGPALAIAYLVAGVFAFFVVKALGELVLYRPSSGSFVSYAREFLGEKGAYVAGWMYFLNWSTTGIADITAIALYTHYWSMFTSIPQWVLALVALAVVLAVNLISVKIFGEMEFWFAIVKVATLVGFMLIGIFLLATQHEVSGQTPGMGMITDHGGILPHGVMPVVLVMQGVIFSYAALELVGVAAGETAEPHKIVPRAVNSIMWRVALFYVGSVVLLALLLPSSLYSGDESPFVTVLSGIGVPAAGDVMNLVVLTAAMSSLNSGLYSTGRILRSMAMAGSAPRFTGVMSRSQVPYGGILLTCAVCVLGVGLNYLVPSKAFEIVLNVASLGIISTWVIIMICHLVFVRRARAGLVERPGFRLPGSPVTEIVTIAFLLAVVGLMWNDEEVGRKTVLLVPVIAVMLVAGWFGVRRRVAHQAGQERPAPRE</sequence>
<dbReference type="EMBL" id="AL939129">
    <property type="protein sequence ID" value="CAB40684.1"/>
    <property type="molecule type" value="Genomic_DNA"/>
</dbReference>
<dbReference type="PIR" id="T35259">
    <property type="entry name" value="T35259"/>
</dbReference>
<dbReference type="RefSeq" id="NP_630807.1">
    <property type="nucleotide sequence ID" value="NC_003888.3"/>
</dbReference>
<dbReference type="RefSeq" id="WP_011031143.1">
    <property type="nucleotide sequence ID" value="NZ_VNID01000002.1"/>
</dbReference>
<dbReference type="SMR" id="Q9X7P0"/>
<dbReference type="FunCoup" id="Q9X7P0">
    <property type="interactions" value="24"/>
</dbReference>
<dbReference type="STRING" id="100226.gene:17764392"/>
<dbReference type="PaxDb" id="100226-SCO6734"/>
<dbReference type="KEGG" id="sco:SCO6734"/>
<dbReference type="PATRIC" id="fig|100226.15.peg.6842"/>
<dbReference type="eggNOG" id="COG1113">
    <property type="taxonomic scope" value="Bacteria"/>
</dbReference>
<dbReference type="HOGENOM" id="CLU_007946_9_0_11"/>
<dbReference type="InParanoid" id="Q9X7P0"/>
<dbReference type="OrthoDB" id="5297508at2"/>
<dbReference type="PhylomeDB" id="Q9X7P0"/>
<dbReference type="Proteomes" id="UP000001973">
    <property type="component" value="Chromosome"/>
</dbReference>
<dbReference type="GO" id="GO:0005886">
    <property type="term" value="C:plasma membrane"/>
    <property type="evidence" value="ECO:0007669"/>
    <property type="project" value="UniProtKB-SubCell"/>
</dbReference>
<dbReference type="GO" id="GO:0006865">
    <property type="term" value="P:amino acid transport"/>
    <property type="evidence" value="ECO:0007669"/>
    <property type="project" value="UniProtKB-KW"/>
</dbReference>
<dbReference type="GO" id="GO:0055085">
    <property type="term" value="P:transmembrane transport"/>
    <property type="evidence" value="ECO:0007669"/>
    <property type="project" value="InterPro"/>
</dbReference>
<dbReference type="FunFam" id="1.20.1740.10:FF:000001">
    <property type="entry name" value="Amino acid permease"/>
    <property type="match status" value="1"/>
</dbReference>
<dbReference type="Gene3D" id="1.20.1740.10">
    <property type="entry name" value="Amino acid/polyamine transporter I"/>
    <property type="match status" value="1"/>
</dbReference>
<dbReference type="InterPro" id="IPR004841">
    <property type="entry name" value="AA-permease/SLC12A_dom"/>
</dbReference>
<dbReference type="InterPro" id="IPR004840">
    <property type="entry name" value="Amino_acid_permease_CS"/>
</dbReference>
<dbReference type="PANTHER" id="PTHR43495">
    <property type="entry name" value="GABA PERMEASE"/>
    <property type="match status" value="1"/>
</dbReference>
<dbReference type="PANTHER" id="PTHR43495:SF1">
    <property type="entry name" value="L-ASPARAGINE PERMEASE"/>
    <property type="match status" value="1"/>
</dbReference>
<dbReference type="Pfam" id="PF00324">
    <property type="entry name" value="AA_permease"/>
    <property type="match status" value="1"/>
</dbReference>
<dbReference type="PIRSF" id="PIRSF006060">
    <property type="entry name" value="AA_transporter"/>
    <property type="match status" value="1"/>
</dbReference>
<dbReference type="PROSITE" id="PS00218">
    <property type="entry name" value="AMINO_ACID_PERMEASE_1"/>
    <property type="match status" value="1"/>
</dbReference>
<name>ANSP_STRCO</name>